<organism>
    <name type="scientific">Neisseria meningitidis serogroup A / serotype 4A (strain DSM 15465 / Z2491)</name>
    <dbReference type="NCBI Taxonomy" id="122587"/>
    <lineage>
        <taxon>Bacteria</taxon>
        <taxon>Pseudomonadati</taxon>
        <taxon>Pseudomonadota</taxon>
        <taxon>Betaproteobacteria</taxon>
        <taxon>Neisseriales</taxon>
        <taxon>Neisseriaceae</taxon>
        <taxon>Neisseria</taxon>
    </lineage>
</organism>
<accession>P66407</accession>
<accession>A1INX7</accession>
<accession>Q9JQR3</accession>
<proteinExistence type="inferred from homology"/>
<name>RS14_NEIMA</name>
<dbReference type="EMBL" id="AL157959">
    <property type="protein sequence ID" value="CAM07434.1"/>
    <property type="molecule type" value="Genomic_DNA"/>
</dbReference>
<dbReference type="RefSeq" id="WP_002216244.1">
    <property type="nucleotide sequence ID" value="NC_003116.1"/>
</dbReference>
<dbReference type="SMR" id="P66407"/>
<dbReference type="EnsemblBacteria" id="CAM07434">
    <property type="protein sequence ID" value="CAM07434"/>
    <property type="gene ID" value="NMA0116"/>
</dbReference>
<dbReference type="GeneID" id="93387230"/>
<dbReference type="KEGG" id="nma:NMA0116"/>
<dbReference type="HOGENOM" id="CLU_139869_0_1_4"/>
<dbReference type="Proteomes" id="UP000000626">
    <property type="component" value="Chromosome"/>
</dbReference>
<dbReference type="GO" id="GO:0005737">
    <property type="term" value="C:cytoplasm"/>
    <property type="evidence" value="ECO:0007669"/>
    <property type="project" value="UniProtKB-ARBA"/>
</dbReference>
<dbReference type="GO" id="GO:0015935">
    <property type="term" value="C:small ribosomal subunit"/>
    <property type="evidence" value="ECO:0007669"/>
    <property type="project" value="TreeGrafter"/>
</dbReference>
<dbReference type="GO" id="GO:0019843">
    <property type="term" value="F:rRNA binding"/>
    <property type="evidence" value="ECO:0007669"/>
    <property type="project" value="UniProtKB-UniRule"/>
</dbReference>
<dbReference type="GO" id="GO:0003735">
    <property type="term" value="F:structural constituent of ribosome"/>
    <property type="evidence" value="ECO:0007669"/>
    <property type="project" value="InterPro"/>
</dbReference>
<dbReference type="GO" id="GO:0006412">
    <property type="term" value="P:translation"/>
    <property type="evidence" value="ECO:0007669"/>
    <property type="project" value="UniProtKB-UniRule"/>
</dbReference>
<dbReference type="FunFam" id="1.10.287.1480:FF:000001">
    <property type="entry name" value="30S ribosomal protein S14"/>
    <property type="match status" value="1"/>
</dbReference>
<dbReference type="Gene3D" id="1.10.287.1480">
    <property type="match status" value="1"/>
</dbReference>
<dbReference type="HAMAP" id="MF_00537">
    <property type="entry name" value="Ribosomal_uS14_1"/>
    <property type="match status" value="1"/>
</dbReference>
<dbReference type="InterPro" id="IPR001209">
    <property type="entry name" value="Ribosomal_uS14"/>
</dbReference>
<dbReference type="InterPro" id="IPR023036">
    <property type="entry name" value="Ribosomal_uS14_bac/plastid"/>
</dbReference>
<dbReference type="NCBIfam" id="NF006477">
    <property type="entry name" value="PRK08881.1"/>
    <property type="match status" value="1"/>
</dbReference>
<dbReference type="PANTHER" id="PTHR19836">
    <property type="entry name" value="30S RIBOSOMAL PROTEIN S14"/>
    <property type="match status" value="1"/>
</dbReference>
<dbReference type="PANTHER" id="PTHR19836:SF19">
    <property type="entry name" value="SMALL RIBOSOMAL SUBUNIT PROTEIN US14M"/>
    <property type="match status" value="1"/>
</dbReference>
<dbReference type="Pfam" id="PF00253">
    <property type="entry name" value="Ribosomal_S14"/>
    <property type="match status" value="1"/>
</dbReference>
<dbReference type="SUPFAM" id="SSF57716">
    <property type="entry name" value="Glucocorticoid receptor-like (DNA-binding domain)"/>
    <property type="match status" value="1"/>
</dbReference>
<gene>
    <name evidence="1" type="primary">rpsN</name>
    <name type="ordered locus">NMA0116</name>
</gene>
<sequence length="101" mass="11518">MAKKALINRDLKRQALAKKYAAKRAAIKAVINDSNATEEERFEARLRFQSIPRNAAPVRQRRRCALTGRPRGTFRKFGLGRIKIREIAMRGEIPGVVKASW</sequence>
<feature type="chain" id="PRO_0000130914" description="Small ribosomal subunit protein uS14">
    <location>
        <begin position="1"/>
        <end position="101"/>
    </location>
</feature>
<comment type="function">
    <text evidence="1">Binds 16S rRNA, required for the assembly of 30S particles and may also be responsible for determining the conformation of the 16S rRNA at the A site.</text>
</comment>
<comment type="subunit">
    <text evidence="1">Part of the 30S ribosomal subunit. Contacts proteins S3 and S10.</text>
</comment>
<comment type="similarity">
    <text evidence="1">Belongs to the universal ribosomal protein uS14 family.</text>
</comment>
<evidence type="ECO:0000255" key="1">
    <source>
        <dbReference type="HAMAP-Rule" id="MF_00537"/>
    </source>
</evidence>
<evidence type="ECO:0000305" key="2"/>
<keyword id="KW-0687">Ribonucleoprotein</keyword>
<keyword id="KW-0689">Ribosomal protein</keyword>
<keyword id="KW-0694">RNA-binding</keyword>
<keyword id="KW-0699">rRNA-binding</keyword>
<reference key="1">
    <citation type="journal article" date="2000" name="Nature">
        <title>Complete DNA sequence of a serogroup A strain of Neisseria meningitidis Z2491.</title>
        <authorList>
            <person name="Parkhill J."/>
            <person name="Achtman M."/>
            <person name="James K.D."/>
            <person name="Bentley S.D."/>
            <person name="Churcher C.M."/>
            <person name="Klee S.R."/>
            <person name="Morelli G."/>
            <person name="Basham D."/>
            <person name="Brown D."/>
            <person name="Chillingworth T."/>
            <person name="Davies R.M."/>
            <person name="Davis P."/>
            <person name="Devlin K."/>
            <person name="Feltwell T."/>
            <person name="Hamlin N."/>
            <person name="Holroyd S."/>
            <person name="Jagels K."/>
            <person name="Leather S."/>
            <person name="Moule S."/>
            <person name="Mungall K.L."/>
            <person name="Quail M.A."/>
            <person name="Rajandream M.A."/>
            <person name="Rutherford K.M."/>
            <person name="Simmonds M."/>
            <person name="Skelton J."/>
            <person name="Whitehead S."/>
            <person name="Spratt B.G."/>
            <person name="Barrell B.G."/>
        </authorList>
    </citation>
    <scope>NUCLEOTIDE SEQUENCE [LARGE SCALE GENOMIC DNA]</scope>
    <source>
        <strain>DSM 15465 / Z2491</strain>
    </source>
</reference>
<protein>
    <recommendedName>
        <fullName evidence="1">Small ribosomal subunit protein uS14</fullName>
    </recommendedName>
    <alternativeName>
        <fullName evidence="2">30S ribosomal protein S14</fullName>
    </alternativeName>
</protein>